<dbReference type="EMBL" id="CP000514">
    <property type="protein sequence ID" value="ABM17938.1"/>
    <property type="molecule type" value="Genomic_DNA"/>
</dbReference>
<dbReference type="RefSeq" id="WP_011784360.1">
    <property type="nucleotide sequence ID" value="NC_008740.1"/>
</dbReference>
<dbReference type="SMR" id="A1TYW9"/>
<dbReference type="STRING" id="351348.Maqu_0842"/>
<dbReference type="GeneID" id="31820218"/>
<dbReference type="KEGG" id="maq:Maqu_0842"/>
<dbReference type="eggNOG" id="COG1327">
    <property type="taxonomic scope" value="Bacteria"/>
</dbReference>
<dbReference type="HOGENOM" id="CLU_108412_0_0_6"/>
<dbReference type="OrthoDB" id="9807461at2"/>
<dbReference type="Proteomes" id="UP000000998">
    <property type="component" value="Chromosome"/>
</dbReference>
<dbReference type="GO" id="GO:0005524">
    <property type="term" value="F:ATP binding"/>
    <property type="evidence" value="ECO:0007669"/>
    <property type="project" value="UniProtKB-KW"/>
</dbReference>
<dbReference type="GO" id="GO:0003677">
    <property type="term" value="F:DNA binding"/>
    <property type="evidence" value="ECO:0007669"/>
    <property type="project" value="UniProtKB-KW"/>
</dbReference>
<dbReference type="GO" id="GO:0008270">
    <property type="term" value="F:zinc ion binding"/>
    <property type="evidence" value="ECO:0007669"/>
    <property type="project" value="UniProtKB-UniRule"/>
</dbReference>
<dbReference type="GO" id="GO:0045892">
    <property type="term" value="P:negative regulation of DNA-templated transcription"/>
    <property type="evidence" value="ECO:0007669"/>
    <property type="project" value="UniProtKB-UniRule"/>
</dbReference>
<dbReference type="HAMAP" id="MF_00440">
    <property type="entry name" value="NrdR"/>
    <property type="match status" value="1"/>
</dbReference>
<dbReference type="InterPro" id="IPR005144">
    <property type="entry name" value="ATP-cone_dom"/>
</dbReference>
<dbReference type="InterPro" id="IPR055173">
    <property type="entry name" value="NrdR-like_N"/>
</dbReference>
<dbReference type="InterPro" id="IPR003796">
    <property type="entry name" value="RNR_NrdR-like"/>
</dbReference>
<dbReference type="NCBIfam" id="TIGR00244">
    <property type="entry name" value="transcriptional regulator NrdR"/>
    <property type="match status" value="1"/>
</dbReference>
<dbReference type="PANTHER" id="PTHR30455">
    <property type="entry name" value="TRANSCRIPTIONAL REPRESSOR NRDR"/>
    <property type="match status" value="1"/>
</dbReference>
<dbReference type="PANTHER" id="PTHR30455:SF2">
    <property type="entry name" value="TRANSCRIPTIONAL REPRESSOR NRDR"/>
    <property type="match status" value="1"/>
</dbReference>
<dbReference type="Pfam" id="PF03477">
    <property type="entry name" value="ATP-cone"/>
    <property type="match status" value="1"/>
</dbReference>
<dbReference type="Pfam" id="PF22811">
    <property type="entry name" value="Zn_ribbon_NrdR"/>
    <property type="match status" value="1"/>
</dbReference>
<dbReference type="PROSITE" id="PS51161">
    <property type="entry name" value="ATP_CONE"/>
    <property type="match status" value="1"/>
</dbReference>
<evidence type="ECO:0000255" key="1">
    <source>
        <dbReference type="HAMAP-Rule" id="MF_00440"/>
    </source>
</evidence>
<accession>A1TYW9</accession>
<sequence>MHCPFCGEADTKVIDSRLVAEGDQVRRRRECLSCRERFTTFETAELVMPRVVKQDGTRQPFDEEKLRAGIMKALEKRPVSIEEIDAALNRIKYRLRSTGEREVKSMQLGEEVMTELRQLDKVAYVRFASVYRSFQDINEFKEEIERLSQGNGDTAVDVARALVDNGTDKGKA</sequence>
<reference key="1">
    <citation type="journal article" date="2011" name="Appl. Environ. Microbiol.">
        <title>Genomic potential of Marinobacter aquaeolei, a biogeochemical 'opportunitroph'.</title>
        <authorList>
            <person name="Singer E."/>
            <person name="Webb E.A."/>
            <person name="Nelson W.C."/>
            <person name="Heidelberg J.F."/>
            <person name="Ivanova N."/>
            <person name="Pati A."/>
            <person name="Edwards K.J."/>
        </authorList>
    </citation>
    <scope>NUCLEOTIDE SEQUENCE [LARGE SCALE GENOMIC DNA]</scope>
    <source>
        <strain>ATCC 700491 / DSM 11845 / VT8</strain>
    </source>
</reference>
<feature type="chain" id="PRO_1000080771" description="Transcriptional repressor NrdR">
    <location>
        <begin position="1"/>
        <end position="172"/>
    </location>
</feature>
<feature type="domain" description="ATP-cone" evidence="1">
    <location>
        <begin position="49"/>
        <end position="139"/>
    </location>
</feature>
<feature type="zinc finger region" evidence="1">
    <location>
        <begin position="3"/>
        <end position="34"/>
    </location>
</feature>
<gene>
    <name evidence="1" type="primary">nrdR</name>
    <name type="ordered locus">Maqu_0842</name>
</gene>
<keyword id="KW-0067">ATP-binding</keyword>
<keyword id="KW-0238">DNA-binding</keyword>
<keyword id="KW-0479">Metal-binding</keyword>
<keyword id="KW-0547">Nucleotide-binding</keyword>
<keyword id="KW-0678">Repressor</keyword>
<keyword id="KW-0804">Transcription</keyword>
<keyword id="KW-0805">Transcription regulation</keyword>
<keyword id="KW-0862">Zinc</keyword>
<keyword id="KW-0863">Zinc-finger</keyword>
<protein>
    <recommendedName>
        <fullName evidence="1">Transcriptional repressor NrdR</fullName>
    </recommendedName>
</protein>
<proteinExistence type="inferred from homology"/>
<name>NRDR_MARN8</name>
<organism>
    <name type="scientific">Marinobacter nauticus (strain ATCC 700491 / DSM 11845 / VT8)</name>
    <name type="common">Marinobacter aquaeolei</name>
    <dbReference type="NCBI Taxonomy" id="351348"/>
    <lineage>
        <taxon>Bacteria</taxon>
        <taxon>Pseudomonadati</taxon>
        <taxon>Pseudomonadota</taxon>
        <taxon>Gammaproteobacteria</taxon>
        <taxon>Pseudomonadales</taxon>
        <taxon>Marinobacteraceae</taxon>
        <taxon>Marinobacter</taxon>
    </lineage>
</organism>
<comment type="function">
    <text evidence="1">Negatively regulates transcription of bacterial ribonucleotide reductase nrd genes and operons by binding to NrdR-boxes.</text>
</comment>
<comment type="cofactor">
    <cofactor evidence="1">
        <name>Zn(2+)</name>
        <dbReference type="ChEBI" id="CHEBI:29105"/>
    </cofactor>
    <text evidence="1">Binds 1 zinc ion.</text>
</comment>
<comment type="similarity">
    <text evidence="1">Belongs to the NrdR family.</text>
</comment>